<sequence length="121" mass="13627">MISRVTEALSKVKGSMGSHERHALPGVIGDDLLRFGKLPLCLFICIILTAVTVVTTAHHTRLLTAQREQLVLERDALDIEWRNLILEENALGDHSRVERIATEKLQMQHVDPSQENIVVQK</sequence>
<proteinExistence type="inferred from homology"/>
<name>FTSL_ECO57</name>
<reference key="1">
    <citation type="journal article" date="2001" name="Nature">
        <title>Genome sequence of enterohaemorrhagic Escherichia coli O157:H7.</title>
        <authorList>
            <person name="Perna N.T."/>
            <person name="Plunkett G. III"/>
            <person name="Burland V."/>
            <person name="Mau B."/>
            <person name="Glasner J.D."/>
            <person name="Rose D.J."/>
            <person name="Mayhew G.F."/>
            <person name="Evans P.S."/>
            <person name="Gregor J."/>
            <person name="Kirkpatrick H.A."/>
            <person name="Posfai G."/>
            <person name="Hackett J."/>
            <person name="Klink S."/>
            <person name="Boutin A."/>
            <person name="Shao Y."/>
            <person name="Miller L."/>
            <person name="Grotbeck E.J."/>
            <person name="Davis N.W."/>
            <person name="Lim A."/>
            <person name="Dimalanta E.T."/>
            <person name="Potamousis K."/>
            <person name="Apodaca J."/>
            <person name="Anantharaman T.S."/>
            <person name="Lin J."/>
            <person name="Yen G."/>
            <person name="Schwartz D.C."/>
            <person name="Welch R.A."/>
            <person name="Blattner F.R."/>
        </authorList>
    </citation>
    <scope>NUCLEOTIDE SEQUENCE [LARGE SCALE GENOMIC DNA]</scope>
    <source>
        <strain>O157:H7 / EDL933 / ATCC 700927 / EHEC</strain>
    </source>
</reference>
<reference key="2">
    <citation type="journal article" date="2001" name="DNA Res.">
        <title>Complete genome sequence of enterohemorrhagic Escherichia coli O157:H7 and genomic comparison with a laboratory strain K-12.</title>
        <authorList>
            <person name="Hayashi T."/>
            <person name="Makino K."/>
            <person name="Ohnishi M."/>
            <person name="Kurokawa K."/>
            <person name="Ishii K."/>
            <person name="Yokoyama K."/>
            <person name="Han C.-G."/>
            <person name="Ohtsubo E."/>
            <person name="Nakayama K."/>
            <person name="Murata T."/>
            <person name="Tanaka M."/>
            <person name="Tobe T."/>
            <person name="Iida T."/>
            <person name="Takami H."/>
            <person name="Honda T."/>
            <person name="Sasakawa C."/>
            <person name="Ogasawara N."/>
            <person name="Yasunaga T."/>
            <person name="Kuhara S."/>
            <person name="Shiba T."/>
            <person name="Hattori M."/>
            <person name="Shinagawa H."/>
        </authorList>
    </citation>
    <scope>NUCLEOTIDE SEQUENCE [LARGE SCALE GENOMIC DNA]</scope>
    <source>
        <strain>O157:H7 / Sakai / RIMD 0509952 / EHEC</strain>
    </source>
</reference>
<evidence type="ECO:0000255" key="1">
    <source>
        <dbReference type="HAMAP-Rule" id="MF_00910"/>
    </source>
</evidence>
<accession>P0AEN6</accession>
<accession>P22187</accession>
<accession>Q8KMX6</accession>
<feature type="chain" id="PRO_0000087373" description="Cell division protein FtsL">
    <location>
        <begin position="1"/>
        <end position="121"/>
    </location>
</feature>
<feature type="topological domain" description="Cytoplasmic" evidence="1">
    <location>
        <begin position="1"/>
        <end position="34"/>
    </location>
</feature>
<feature type="transmembrane region" description="Helical" evidence="1">
    <location>
        <begin position="35"/>
        <end position="57"/>
    </location>
</feature>
<feature type="topological domain" description="Periplasmic" evidence="1">
    <location>
        <begin position="58"/>
        <end position="121"/>
    </location>
</feature>
<gene>
    <name evidence="1" type="primary">ftsL</name>
    <name type="ordered locus">Z0093</name>
    <name type="ordered locus">ECs0087</name>
</gene>
<dbReference type="EMBL" id="AE005174">
    <property type="protein sequence ID" value="AAG54387.1"/>
    <property type="molecule type" value="Genomic_DNA"/>
</dbReference>
<dbReference type="EMBL" id="BA000007">
    <property type="protein sequence ID" value="BAB33510.1"/>
    <property type="molecule type" value="Genomic_DNA"/>
</dbReference>
<dbReference type="PIR" id="G85490">
    <property type="entry name" value="G85490"/>
</dbReference>
<dbReference type="PIR" id="G90639">
    <property type="entry name" value="G90639"/>
</dbReference>
<dbReference type="RefSeq" id="NP_308114.1">
    <property type="nucleotide sequence ID" value="NC_002695.1"/>
</dbReference>
<dbReference type="RefSeq" id="WP_000625658.1">
    <property type="nucleotide sequence ID" value="NZ_VOAI01000002.1"/>
</dbReference>
<dbReference type="SMR" id="P0AEN6"/>
<dbReference type="STRING" id="155864.Z0093"/>
<dbReference type="GeneID" id="913534"/>
<dbReference type="GeneID" id="93777351"/>
<dbReference type="KEGG" id="ece:Z0093"/>
<dbReference type="KEGG" id="ecs:ECs_0087"/>
<dbReference type="PATRIC" id="fig|386585.9.peg.187"/>
<dbReference type="eggNOG" id="COG3116">
    <property type="taxonomic scope" value="Bacteria"/>
</dbReference>
<dbReference type="HOGENOM" id="CLU_156524_2_0_6"/>
<dbReference type="OMA" id="DLWHHKW"/>
<dbReference type="Proteomes" id="UP000000558">
    <property type="component" value="Chromosome"/>
</dbReference>
<dbReference type="Proteomes" id="UP000002519">
    <property type="component" value="Chromosome"/>
</dbReference>
<dbReference type="GO" id="GO:0032153">
    <property type="term" value="C:cell division site"/>
    <property type="evidence" value="ECO:0007669"/>
    <property type="project" value="UniProtKB-UniRule"/>
</dbReference>
<dbReference type="GO" id="GO:0005886">
    <property type="term" value="C:plasma membrane"/>
    <property type="evidence" value="ECO:0007669"/>
    <property type="project" value="UniProtKB-SubCell"/>
</dbReference>
<dbReference type="GO" id="GO:0043093">
    <property type="term" value="P:FtsZ-dependent cytokinesis"/>
    <property type="evidence" value="ECO:0007669"/>
    <property type="project" value="UniProtKB-UniRule"/>
</dbReference>
<dbReference type="HAMAP" id="MF_00910">
    <property type="entry name" value="FtsL"/>
    <property type="match status" value="1"/>
</dbReference>
<dbReference type="InterPro" id="IPR011922">
    <property type="entry name" value="Cell_div_FtsL"/>
</dbReference>
<dbReference type="NCBIfam" id="TIGR02209">
    <property type="entry name" value="ftsL_broad"/>
    <property type="match status" value="1"/>
</dbReference>
<dbReference type="NCBIfam" id="NF008040">
    <property type="entry name" value="PRK10772.1"/>
    <property type="match status" value="1"/>
</dbReference>
<dbReference type="PANTHER" id="PTHR37479">
    <property type="entry name" value="CELL DIVISION PROTEIN FTSL"/>
    <property type="match status" value="1"/>
</dbReference>
<dbReference type="PANTHER" id="PTHR37479:SF1">
    <property type="entry name" value="CELL DIVISION PROTEIN FTSL"/>
    <property type="match status" value="1"/>
</dbReference>
<dbReference type="Pfam" id="PF04999">
    <property type="entry name" value="FtsL"/>
    <property type="match status" value="1"/>
</dbReference>
<organism>
    <name type="scientific">Escherichia coli O157:H7</name>
    <dbReference type="NCBI Taxonomy" id="83334"/>
    <lineage>
        <taxon>Bacteria</taxon>
        <taxon>Pseudomonadati</taxon>
        <taxon>Pseudomonadota</taxon>
        <taxon>Gammaproteobacteria</taxon>
        <taxon>Enterobacterales</taxon>
        <taxon>Enterobacteriaceae</taxon>
        <taxon>Escherichia</taxon>
    </lineage>
</organism>
<comment type="function">
    <text evidence="1">Essential cell division protein. May link together the upstream cell division proteins, which are predominantly cytoplasmic, with the downstream cell division proteins, which are predominantly periplasmic.</text>
</comment>
<comment type="subunit">
    <text evidence="1">Part of a complex composed of FtsB, FtsL and FtsQ.</text>
</comment>
<comment type="subcellular location">
    <subcellularLocation>
        <location evidence="1">Cell inner membrane</location>
        <topology evidence="1">Single-pass type II membrane protein</topology>
    </subcellularLocation>
    <text evidence="1">Localizes to the division septum where it forms a ring structure.</text>
</comment>
<comment type="similarity">
    <text evidence="1">Belongs to the FtsL family.</text>
</comment>
<keyword id="KW-0131">Cell cycle</keyword>
<keyword id="KW-0132">Cell division</keyword>
<keyword id="KW-0997">Cell inner membrane</keyword>
<keyword id="KW-1003">Cell membrane</keyword>
<keyword id="KW-0472">Membrane</keyword>
<keyword id="KW-1185">Reference proteome</keyword>
<keyword id="KW-0812">Transmembrane</keyword>
<keyword id="KW-1133">Transmembrane helix</keyword>
<protein>
    <recommendedName>
        <fullName evidence="1">Cell division protein FtsL</fullName>
    </recommendedName>
</protein>